<feature type="chain" id="PRO_1000022229" description="Potassium-transporting ATPase potassium-binding subunit">
    <location>
        <begin position="1"/>
        <end position="556"/>
    </location>
</feature>
<feature type="transmembrane region" description="Helical" evidence="1">
    <location>
        <begin position="3"/>
        <end position="23"/>
    </location>
</feature>
<feature type="transmembrane region" description="Helical" evidence="1">
    <location>
        <begin position="57"/>
        <end position="77"/>
    </location>
</feature>
<feature type="transmembrane region" description="Helical" evidence="1">
    <location>
        <begin position="129"/>
        <end position="149"/>
    </location>
</feature>
<feature type="transmembrane region" description="Helical" evidence="1">
    <location>
        <begin position="172"/>
        <end position="192"/>
    </location>
</feature>
<feature type="transmembrane region" description="Helical" evidence="1">
    <location>
        <begin position="247"/>
        <end position="267"/>
    </location>
</feature>
<feature type="transmembrane region" description="Helical" evidence="1">
    <location>
        <begin position="278"/>
        <end position="298"/>
    </location>
</feature>
<feature type="transmembrane region" description="Helical" evidence="1">
    <location>
        <begin position="319"/>
        <end position="339"/>
    </location>
</feature>
<feature type="transmembrane region" description="Helical" evidence="1">
    <location>
        <begin position="346"/>
        <end position="366"/>
    </location>
</feature>
<feature type="transmembrane region" description="Helical" evidence="1">
    <location>
        <begin position="371"/>
        <end position="391"/>
    </location>
</feature>
<feature type="transmembrane region" description="Helical" evidence="1">
    <location>
        <begin position="408"/>
        <end position="428"/>
    </location>
</feature>
<feature type="transmembrane region" description="Helical" evidence="1">
    <location>
        <begin position="486"/>
        <end position="506"/>
    </location>
</feature>
<feature type="transmembrane region" description="Helical" evidence="1">
    <location>
        <begin position="516"/>
        <end position="536"/>
    </location>
</feature>
<protein>
    <recommendedName>
        <fullName evidence="1">Potassium-transporting ATPase potassium-binding subunit</fullName>
    </recommendedName>
    <alternativeName>
        <fullName evidence="1">ATP phosphohydrolase [potassium-transporting] A chain</fullName>
    </alternativeName>
    <alternativeName>
        <fullName evidence="1">Potassium-binding and translocating subunit A</fullName>
    </alternativeName>
    <alternativeName>
        <fullName evidence="1">Potassium-translocating ATPase A chain</fullName>
    </alternativeName>
</protein>
<organism>
    <name type="scientific">Paramagnetospirillum magneticum (strain ATCC 700264 / AMB-1)</name>
    <name type="common">Magnetospirillum magneticum</name>
    <dbReference type="NCBI Taxonomy" id="342108"/>
    <lineage>
        <taxon>Bacteria</taxon>
        <taxon>Pseudomonadati</taxon>
        <taxon>Pseudomonadota</taxon>
        <taxon>Alphaproteobacteria</taxon>
        <taxon>Rhodospirillales</taxon>
        <taxon>Magnetospirillaceae</taxon>
        <taxon>Paramagnetospirillum</taxon>
    </lineage>
</organism>
<keyword id="KW-0997">Cell inner membrane</keyword>
<keyword id="KW-1003">Cell membrane</keyword>
<keyword id="KW-0406">Ion transport</keyword>
<keyword id="KW-0472">Membrane</keyword>
<keyword id="KW-0630">Potassium</keyword>
<keyword id="KW-0633">Potassium transport</keyword>
<keyword id="KW-0812">Transmembrane</keyword>
<keyword id="KW-1133">Transmembrane helix</keyword>
<keyword id="KW-0813">Transport</keyword>
<accession>Q2W612</accession>
<dbReference type="EMBL" id="AP007255">
    <property type="protein sequence ID" value="BAE50713.1"/>
    <property type="molecule type" value="Genomic_DNA"/>
</dbReference>
<dbReference type="RefSeq" id="WP_011384314.1">
    <property type="nucleotide sequence ID" value="NC_007626.1"/>
</dbReference>
<dbReference type="SMR" id="Q2W612"/>
<dbReference type="STRING" id="342108.amb1909"/>
<dbReference type="KEGG" id="mag:amb1909"/>
<dbReference type="HOGENOM" id="CLU_018614_3_0_5"/>
<dbReference type="OrthoDB" id="9763796at2"/>
<dbReference type="Proteomes" id="UP000007058">
    <property type="component" value="Chromosome"/>
</dbReference>
<dbReference type="GO" id="GO:0005886">
    <property type="term" value="C:plasma membrane"/>
    <property type="evidence" value="ECO:0007669"/>
    <property type="project" value="UniProtKB-SubCell"/>
</dbReference>
<dbReference type="GO" id="GO:0008556">
    <property type="term" value="F:P-type potassium transmembrane transporter activity"/>
    <property type="evidence" value="ECO:0007669"/>
    <property type="project" value="InterPro"/>
</dbReference>
<dbReference type="GO" id="GO:0030955">
    <property type="term" value="F:potassium ion binding"/>
    <property type="evidence" value="ECO:0007669"/>
    <property type="project" value="UniProtKB-UniRule"/>
</dbReference>
<dbReference type="HAMAP" id="MF_00275">
    <property type="entry name" value="KdpA"/>
    <property type="match status" value="1"/>
</dbReference>
<dbReference type="InterPro" id="IPR004623">
    <property type="entry name" value="KdpA"/>
</dbReference>
<dbReference type="NCBIfam" id="TIGR00680">
    <property type="entry name" value="kdpA"/>
    <property type="match status" value="1"/>
</dbReference>
<dbReference type="PANTHER" id="PTHR30607">
    <property type="entry name" value="POTASSIUM-TRANSPORTING ATPASE A CHAIN"/>
    <property type="match status" value="1"/>
</dbReference>
<dbReference type="PANTHER" id="PTHR30607:SF2">
    <property type="entry name" value="POTASSIUM-TRANSPORTING ATPASE POTASSIUM-BINDING SUBUNIT"/>
    <property type="match status" value="1"/>
</dbReference>
<dbReference type="Pfam" id="PF03814">
    <property type="entry name" value="KdpA"/>
    <property type="match status" value="1"/>
</dbReference>
<dbReference type="PIRSF" id="PIRSF001294">
    <property type="entry name" value="K_ATPaseA"/>
    <property type="match status" value="1"/>
</dbReference>
<reference key="1">
    <citation type="journal article" date="2005" name="DNA Res.">
        <title>Complete genome sequence of the facultative anaerobic magnetotactic bacterium Magnetospirillum sp. strain AMB-1.</title>
        <authorList>
            <person name="Matsunaga T."/>
            <person name="Okamura Y."/>
            <person name="Fukuda Y."/>
            <person name="Wahyudi A.T."/>
            <person name="Murase Y."/>
            <person name="Takeyama H."/>
        </authorList>
    </citation>
    <scope>NUCLEOTIDE SEQUENCE [LARGE SCALE GENOMIC DNA]</scope>
    <source>
        <strain>ATCC 700264 / AMB-1</strain>
    </source>
</reference>
<gene>
    <name evidence="1" type="primary">kdpA</name>
    <name type="ordered locus">amb1909</name>
</gene>
<name>KDPA_PARM1</name>
<proteinExistence type="inferred from homology"/>
<evidence type="ECO:0000255" key="1">
    <source>
        <dbReference type="HAMAP-Rule" id="MF_00275"/>
    </source>
</evidence>
<sequence length="556" mass="57635">MDAHGVLQFLLFLALVLALTPILGRFMTWLFQAPVGRVEDGFYRLLGIDPTREQGWAAYAVSLLIFHLLAVFGLYALQRFQGMLPLNPAGQGAVPPDLAFNTAISFATNTNWQNYGGESTMSHLTQMAGLTVHNFLSAAAGIAVAVALMRGFARHSTRTVGNFYVDITRVTLGLLLPLCLVGALVLVGQGVPQNFDAPVTVTTLEGVSQVIAQGPVASQMMIKHLGTNGGGFFNANAAHPYENPNALVNLIHMLAIFAIGAALTNTFGRMAGDRRQGWALLGAMAALFLAGLGAAWWAEAQGNPVLGGIANMEGKEVRLGVAASMLFAVVTTVTSCGAVNAMHDSLLPLAGMIPMVNMLLGEVVVGGVGSGLYGMVVFALLTVFIAGLMVGRTPEYLGKKIEAREIKLAVIAILATPVAVLGIGGLAITLPMGQAGIAAAGPHGLSEVLYAFASAGNNNGSAFGGLSGNTIFYNATMAAAMMIGRFVVMIPVLAIAGALAAKMAVPASAGTFPTHGWLFVVLLVGIVLVVGGLTYFPVLVLGPVVEHLALSAGILF</sequence>
<comment type="function">
    <text evidence="1">Part of the high-affinity ATP-driven potassium transport (or Kdp) system, which catalyzes the hydrolysis of ATP coupled with the electrogenic transport of potassium into the cytoplasm. This subunit binds the periplasmic potassium ions and delivers the ions to the membrane domain of KdpB through an intramembrane tunnel.</text>
</comment>
<comment type="subunit">
    <text evidence="1">The system is composed of three essential subunits: KdpA, KdpB and KdpC.</text>
</comment>
<comment type="subcellular location">
    <subcellularLocation>
        <location evidence="1">Cell inner membrane</location>
        <topology evidence="1">Multi-pass membrane protein</topology>
    </subcellularLocation>
</comment>
<comment type="similarity">
    <text evidence="1">Belongs to the KdpA family.</text>
</comment>